<accession>Q6G026</accession>
<evidence type="ECO:0000255" key="1">
    <source>
        <dbReference type="HAMAP-Rule" id="MF_00056"/>
    </source>
</evidence>
<protein>
    <recommendedName>
        <fullName evidence="1">2-dehydro-3-deoxyphosphooctonate aldolase</fullName>
        <ecNumber evidence="1">2.5.1.55</ecNumber>
    </recommendedName>
    <alternativeName>
        <fullName evidence="1">3-deoxy-D-manno-octulosonic acid 8-phosphate synthase</fullName>
    </alternativeName>
    <alternativeName>
        <fullName evidence="1">KDO-8-phosphate synthase</fullName>
        <shortName evidence="1">KDO 8-P synthase</shortName>
        <shortName evidence="1">KDOPS</shortName>
    </alternativeName>
    <alternativeName>
        <fullName evidence="1">Phospho-2-dehydro-3-deoxyoctonate aldolase</fullName>
    </alternativeName>
</protein>
<comment type="catalytic activity">
    <reaction evidence="1">
        <text>D-arabinose 5-phosphate + phosphoenolpyruvate + H2O = 3-deoxy-alpha-D-manno-2-octulosonate-8-phosphate + phosphate</text>
        <dbReference type="Rhea" id="RHEA:14053"/>
        <dbReference type="ChEBI" id="CHEBI:15377"/>
        <dbReference type="ChEBI" id="CHEBI:43474"/>
        <dbReference type="ChEBI" id="CHEBI:57693"/>
        <dbReference type="ChEBI" id="CHEBI:58702"/>
        <dbReference type="ChEBI" id="CHEBI:85985"/>
        <dbReference type="EC" id="2.5.1.55"/>
    </reaction>
</comment>
<comment type="pathway">
    <text evidence="1">Carbohydrate biosynthesis; 3-deoxy-D-manno-octulosonate biosynthesis; 3-deoxy-D-manno-octulosonate from D-ribulose 5-phosphate: step 2/3.</text>
</comment>
<comment type="pathway">
    <text evidence="1">Bacterial outer membrane biogenesis; lipopolysaccharide biosynthesis.</text>
</comment>
<comment type="subcellular location">
    <subcellularLocation>
        <location evidence="1">Cytoplasm</location>
    </subcellularLocation>
</comment>
<comment type="similarity">
    <text evidence="1">Belongs to the KdsA family.</text>
</comment>
<sequence length="278" mass="30321">MFQPNTIVKVGNIVFSNETPFSLIVGPCQMESRDHAFEMAGRIKTITDQIGIGFVYKSSYDKANRTSLGAARGIGLEKAMAIFSDIKKEFGCPVLTDVHTEEQCAAVGSVVDVLQIPAFLCRQTDLLVAAAKTGRVINIKKGQFLAPWDMENVLKKVTQSGNPHVMLCERGTSFGYNRLISDMRSLPILRSFGAPVIFDATHSVQEPGGQGDSSGGQRQFVEVLARAAVSVGVAGIFLETHQDPDNAPSDGPNMVKIDHLQRLLETLMEFDYLSKKVN</sequence>
<organism>
    <name type="scientific">Bartonella quintana (strain Toulouse)</name>
    <name type="common">Rochalimaea quintana</name>
    <dbReference type="NCBI Taxonomy" id="283165"/>
    <lineage>
        <taxon>Bacteria</taxon>
        <taxon>Pseudomonadati</taxon>
        <taxon>Pseudomonadota</taxon>
        <taxon>Alphaproteobacteria</taxon>
        <taxon>Hyphomicrobiales</taxon>
        <taxon>Bartonellaceae</taxon>
        <taxon>Bartonella</taxon>
    </lineage>
</organism>
<feature type="chain" id="PRO_0000187101" description="2-dehydro-3-deoxyphosphooctonate aldolase">
    <location>
        <begin position="1"/>
        <end position="278"/>
    </location>
</feature>
<dbReference type="EC" id="2.5.1.55" evidence="1"/>
<dbReference type="EMBL" id="BX897700">
    <property type="protein sequence ID" value="CAF25986.1"/>
    <property type="molecule type" value="Genomic_DNA"/>
</dbReference>
<dbReference type="RefSeq" id="WP_011179272.1">
    <property type="nucleotide sequence ID" value="NC_005955.1"/>
</dbReference>
<dbReference type="SMR" id="Q6G026"/>
<dbReference type="KEGG" id="bqu:BQ04870"/>
<dbReference type="eggNOG" id="COG2877">
    <property type="taxonomic scope" value="Bacteria"/>
</dbReference>
<dbReference type="HOGENOM" id="CLU_036666_0_0_5"/>
<dbReference type="OrthoDB" id="9776934at2"/>
<dbReference type="UniPathway" id="UPA00030"/>
<dbReference type="UniPathway" id="UPA00357">
    <property type="reaction ID" value="UER00474"/>
</dbReference>
<dbReference type="Proteomes" id="UP000000597">
    <property type="component" value="Chromosome"/>
</dbReference>
<dbReference type="GO" id="GO:0005737">
    <property type="term" value="C:cytoplasm"/>
    <property type="evidence" value="ECO:0007669"/>
    <property type="project" value="UniProtKB-SubCell"/>
</dbReference>
<dbReference type="GO" id="GO:0008676">
    <property type="term" value="F:3-deoxy-8-phosphooctulonate synthase activity"/>
    <property type="evidence" value="ECO:0007669"/>
    <property type="project" value="UniProtKB-UniRule"/>
</dbReference>
<dbReference type="GO" id="GO:0019294">
    <property type="term" value="P:keto-3-deoxy-D-manno-octulosonic acid biosynthetic process"/>
    <property type="evidence" value="ECO:0007669"/>
    <property type="project" value="UniProtKB-UniRule"/>
</dbReference>
<dbReference type="Gene3D" id="3.20.20.70">
    <property type="entry name" value="Aldolase class I"/>
    <property type="match status" value="1"/>
</dbReference>
<dbReference type="HAMAP" id="MF_00056">
    <property type="entry name" value="KDO8P_synth"/>
    <property type="match status" value="1"/>
</dbReference>
<dbReference type="InterPro" id="IPR013785">
    <property type="entry name" value="Aldolase_TIM"/>
</dbReference>
<dbReference type="InterPro" id="IPR006218">
    <property type="entry name" value="DAHP1/KDSA"/>
</dbReference>
<dbReference type="InterPro" id="IPR006269">
    <property type="entry name" value="KDO8P_synthase"/>
</dbReference>
<dbReference type="NCBIfam" id="TIGR01362">
    <property type="entry name" value="KDO8P_synth"/>
    <property type="match status" value="1"/>
</dbReference>
<dbReference type="NCBIfam" id="NF003543">
    <property type="entry name" value="PRK05198.1"/>
    <property type="match status" value="1"/>
</dbReference>
<dbReference type="PANTHER" id="PTHR21057">
    <property type="entry name" value="PHOSPHO-2-DEHYDRO-3-DEOXYHEPTONATE ALDOLASE"/>
    <property type="match status" value="1"/>
</dbReference>
<dbReference type="Pfam" id="PF00793">
    <property type="entry name" value="DAHP_synth_1"/>
    <property type="match status" value="1"/>
</dbReference>
<dbReference type="SUPFAM" id="SSF51569">
    <property type="entry name" value="Aldolase"/>
    <property type="match status" value="1"/>
</dbReference>
<reference key="1">
    <citation type="journal article" date="2004" name="Proc. Natl. Acad. Sci. U.S.A.">
        <title>The louse-borne human pathogen Bartonella quintana is a genomic derivative of the zoonotic agent Bartonella henselae.</title>
        <authorList>
            <person name="Alsmark U.C.M."/>
            <person name="Frank A.C."/>
            <person name="Karlberg E.O."/>
            <person name="Legault B.-A."/>
            <person name="Ardell D.H."/>
            <person name="Canbaeck B."/>
            <person name="Eriksson A.-S."/>
            <person name="Naeslund A.K."/>
            <person name="Handley S.A."/>
            <person name="Huvet M."/>
            <person name="La Scola B."/>
            <person name="Holmberg M."/>
            <person name="Andersson S.G.E."/>
        </authorList>
    </citation>
    <scope>NUCLEOTIDE SEQUENCE [LARGE SCALE GENOMIC DNA]</scope>
    <source>
        <strain>Toulouse</strain>
    </source>
</reference>
<gene>
    <name evidence="1" type="primary">kdsA</name>
    <name type="ordered locus">BQ04870</name>
</gene>
<proteinExistence type="inferred from homology"/>
<name>KDSA_BARQU</name>
<keyword id="KW-0963">Cytoplasm</keyword>
<keyword id="KW-0448">Lipopolysaccharide biosynthesis</keyword>
<keyword id="KW-0808">Transferase</keyword>